<name>Y1692_STAAN</name>
<sequence>MTKKVAIILANEFEDIEYSSPKEALENAGFNTVVIGDTANSEVVGKHGEKVTVDVGIAEAKPEDYDALLIPGGFSPDHLRGDTEGRYGTFAKYFTKNDVPTFAICHGPQILIDTDDLKGRTLTAVLNVRKDLSNAGAHVVDESVVVDNNIVTSRVPDDLDDFNREIVKQLQ</sequence>
<dbReference type="EMBL" id="BA000018">
    <property type="protein sequence ID" value="BAB42961.1"/>
    <property type="molecule type" value="Genomic_DNA"/>
</dbReference>
<dbReference type="PIR" id="B89975">
    <property type="entry name" value="B89975"/>
</dbReference>
<dbReference type="RefSeq" id="WP_000163283.1">
    <property type="nucleotide sequence ID" value="NC_002745.2"/>
</dbReference>
<dbReference type="SMR" id="P0A0K1"/>
<dbReference type="MEROPS" id="C56.001"/>
<dbReference type="EnsemblBacteria" id="BAB42961">
    <property type="protein sequence ID" value="BAB42961"/>
    <property type="gene ID" value="BAB42961"/>
</dbReference>
<dbReference type="KEGG" id="sau:SA1692"/>
<dbReference type="HOGENOM" id="CLU_000445_44_4_9"/>
<dbReference type="CDD" id="cd03134">
    <property type="entry name" value="GATase1_PfpI_like"/>
    <property type="match status" value="1"/>
</dbReference>
<dbReference type="Gene3D" id="3.40.50.880">
    <property type="match status" value="1"/>
</dbReference>
<dbReference type="InterPro" id="IPR006286">
    <property type="entry name" value="C56_PfpI-like"/>
</dbReference>
<dbReference type="InterPro" id="IPR029062">
    <property type="entry name" value="Class_I_gatase-like"/>
</dbReference>
<dbReference type="InterPro" id="IPR002818">
    <property type="entry name" value="DJ-1/PfpI"/>
</dbReference>
<dbReference type="NCBIfam" id="TIGR01382">
    <property type="entry name" value="PfpI"/>
    <property type="match status" value="1"/>
</dbReference>
<dbReference type="PANTHER" id="PTHR42733">
    <property type="entry name" value="DJ-1 PROTEIN"/>
    <property type="match status" value="1"/>
</dbReference>
<dbReference type="PANTHER" id="PTHR42733:SF2">
    <property type="entry name" value="DJ-1_THIJ_PFPI FAMILY PROTEIN"/>
    <property type="match status" value="1"/>
</dbReference>
<dbReference type="Pfam" id="PF01965">
    <property type="entry name" value="DJ-1_PfpI"/>
    <property type="match status" value="1"/>
</dbReference>
<dbReference type="SUPFAM" id="SSF52317">
    <property type="entry name" value="Class I glutamine amidotransferase-like"/>
    <property type="match status" value="1"/>
</dbReference>
<dbReference type="PROSITE" id="PS51276">
    <property type="entry name" value="PEPTIDASE_C56_PFPI"/>
    <property type="match status" value="1"/>
</dbReference>
<comment type="similarity">
    <text evidence="2">Belongs to the peptidase C56 family.</text>
</comment>
<accession>P0A0K1</accession>
<accession>Q53719</accession>
<protein>
    <recommendedName>
        <fullName>Uncharacterized protein SA1692</fullName>
    </recommendedName>
</protein>
<organism>
    <name type="scientific">Staphylococcus aureus (strain N315)</name>
    <dbReference type="NCBI Taxonomy" id="158879"/>
    <lineage>
        <taxon>Bacteria</taxon>
        <taxon>Bacillati</taxon>
        <taxon>Bacillota</taxon>
        <taxon>Bacilli</taxon>
        <taxon>Bacillales</taxon>
        <taxon>Staphylococcaceae</taxon>
        <taxon>Staphylococcus</taxon>
    </lineage>
</organism>
<evidence type="ECO:0000255" key="1">
    <source>
        <dbReference type="PROSITE-ProRule" id="PRU00608"/>
    </source>
</evidence>
<evidence type="ECO:0000305" key="2"/>
<proteinExistence type="inferred from homology"/>
<gene>
    <name type="ordered locus">SA1692</name>
</gene>
<feature type="chain" id="PRO_0000157836" description="Uncharacterized protein SA1692">
    <location>
        <begin position="1"/>
        <end position="171"/>
    </location>
</feature>
<feature type="domain" description="PfpI endopeptidase" evidence="1">
    <location>
        <begin position="3"/>
        <end position="171"/>
    </location>
</feature>
<reference key="1">
    <citation type="journal article" date="2001" name="Lancet">
        <title>Whole genome sequencing of meticillin-resistant Staphylococcus aureus.</title>
        <authorList>
            <person name="Kuroda M."/>
            <person name="Ohta T."/>
            <person name="Uchiyama I."/>
            <person name="Baba T."/>
            <person name="Yuzawa H."/>
            <person name="Kobayashi I."/>
            <person name="Cui L."/>
            <person name="Oguchi A."/>
            <person name="Aoki K."/>
            <person name="Nagai Y."/>
            <person name="Lian J.-Q."/>
            <person name="Ito T."/>
            <person name="Kanamori M."/>
            <person name="Matsumaru H."/>
            <person name="Maruyama A."/>
            <person name="Murakami H."/>
            <person name="Hosoyama A."/>
            <person name="Mizutani-Ui Y."/>
            <person name="Takahashi N.K."/>
            <person name="Sawano T."/>
            <person name="Inoue R."/>
            <person name="Kaito C."/>
            <person name="Sekimizu K."/>
            <person name="Hirakawa H."/>
            <person name="Kuhara S."/>
            <person name="Goto S."/>
            <person name="Yabuzaki J."/>
            <person name="Kanehisa M."/>
            <person name="Yamashita A."/>
            <person name="Oshima K."/>
            <person name="Furuya K."/>
            <person name="Yoshino C."/>
            <person name="Shiba T."/>
            <person name="Hattori M."/>
            <person name="Ogasawara N."/>
            <person name="Hayashi H."/>
            <person name="Hiramatsu K."/>
        </authorList>
    </citation>
    <scope>NUCLEOTIDE SEQUENCE [LARGE SCALE GENOMIC DNA]</scope>
    <source>
        <strain>N315</strain>
    </source>
</reference>